<organism>
    <name type="scientific">Burkholderia pseudomallei (strain 1710b)</name>
    <dbReference type="NCBI Taxonomy" id="320372"/>
    <lineage>
        <taxon>Bacteria</taxon>
        <taxon>Pseudomonadati</taxon>
        <taxon>Pseudomonadota</taxon>
        <taxon>Betaproteobacteria</taxon>
        <taxon>Burkholderiales</taxon>
        <taxon>Burkholderiaceae</taxon>
        <taxon>Burkholderia</taxon>
        <taxon>pseudomallei group</taxon>
    </lineage>
</organism>
<feature type="chain" id="PRO_0000225127" description="Crossover junction endodeoxyribonuclease RuvC">
    <location>
        <begin position="1"/>
        <end position="180"/>
    </location>
</feature>
<feature type="active site" evidence="1">
    <location>
        <position position="7"/>
    </location>
</feature>
<feature type="active site" evidence="1">
    <location>
        <position position="66"/>
    </location>
</feature>
<feature type="active site" evidence="1">
    <location>
        <position position="138"/>
    </location>
</feature>
<feature type="binding site" evidence="1">
    <location>
        <position position="7"/>
    </location>
    <ligand>
        <name>Mg(2+)</name>
        <dbReference type="ChEBI" id="CHEBI:18420"/>
        <label>1</label>
    </ligand>
</feature>
<feature type="binding site" evidence="1">
    <location>
        <position position="66"/>
    </location>
    <ligand>
        <name>Mg(2+)</name>
        <dbReference type="ChEBI" id="CHEBI:18420"/>
        <label>2</label>
    </ligand>
</feature>
<feature type="binding site" evidence="1">
    <location>
        <position position="138"/>
    </location>
    <ligand>
        <name>Mg(2+)</name>
        <dbReference type="ChEBI" id="CHEBI:18420"/>
        <label>1</label>
    </ligand>
</feature>
<accession>Q3JNS7</accession>
<sequence>MRILGIDPGLRVTGFGVIDVSGHQLAYVASGVIKTPTADLPTRLGTIYDGVSTLIREHTPDQAAIEKVFVNVNPQSTLLLGQARGAAICGLVSGGLPVAEYTALQLKQAVVGYGRATKEQMQEMVARLLSLSGRPGTDAADALGMAICHAHGGNTLNTLGGIAPALAKKGLRVRRGRLVG</sequence>
<gene>
    <name evidence="1" type="primary">ruvC</name>
    <name type="ordered locus">BURPS1710b_3405</name>
</gene>
<name>RUVC_BURP1</name>
<keyword id="KW-0963">Cytoplasm</keyword>
<keyword id="KW-0227">DNA damage</keyword>
<keyword id="KW-0233">DNA recombination</keyword>
<keyword id="KW-0234">DNA repair</keyword>
<keyword id="KW-0238">DNA-binding</keyword>
<keyword id="KW-0255">Endonuclease</keyword>
<keyword id="KW-0378">Hydrolase</keyword>
<keyword id="KW-0460">Magnesium</keyword>
<keyword id="KW-0479">Metal-binding</keyword>
<keyword id="KW-0540">Nuclease</keyword>
<evidence type="ECO:0000255" key="1">
    <source>
        <dbReference type="HAMAP-Rule" id="MF_00034"/>
    </source>
</evidence>
<evidence type="ECO:0000305" key="2"/>
<protein>
    <recommendedName>
        <fullName evidence="1">Crossover junction endodeoxyribonuclease RuvC</fullName>
        <ecNumber evidence="1">3.1.21.10</ecNumber>
    </recommendedName>
    <alternativeName>
        <fullName evidence="1">Holliday junction nuclease RuvC</fullName>
    </alternativeName>
    <alternativeName>
        <fullName evidence="1">Holliday junction resolvase RuvC</fullName>
    </alternativeName>
</protein>
<reference key="1">
    <citation type="journal article" date="2010" name="Genome Biol. Evol.">
        <title>Continuing evolution of Burkholderia mallei through genome reduction and large-scale rearrangements.</title>
        <authorList>
            <person name="Losada L."/>
            <person name="Ronning C.M."/>
            <person name="DeShazer D."/>
            <person name="Woods D."/>
            <person name="Fedorova N."/>
            <person name="Kim H.S."/>
            <person name="Shabalina S.A."/>
            <person name="Pearson T.R."/>
            <person name="Brinkac L."/>
            <person name="Tan P."/>
            <person name="Nandi T."/>
            <person name="Crabtree J."/>
            <person name="Badger J."/>
            <person name="Beckstrom-Sternberg S."/>
            <person name="Saqib M."/>
            <person name="Schutzer S.E."/>
            <person name="Keim P."/>
            <person name="Nierman W.C."/>
        </authorList>
    </citation>
    <scope>NUCLEOTIDE SEQUENCE [LARGE SCALE GENOMIC DNA]</scope>
    <source>
        <strain>1710b</strain>
    </source>
</reference>
<dbReference type="EC" id="3.1.21.10" evidence="1"/>
<dbReference type="EMBL" id="CP000124">
    <property type="protein sequence ID" value="ABA50071.1"/>
    <property type="status" value="ALT_INIT"/>
    <property type="molecule type" value="Genomic_DNA"/>
</dbReference>
<dbReference type="RefSeq" id="WP_004196340.1">
    <property type="nucleotide sequence ID" value="NC_007434.1"/>
</dbReference>
<dbReference type="SMR" id="Q3JNS7"/>
<dbReference type="EnsemblBacteria" id="ABA50071">
    <property type="protein sequence ID" value="ABA50071"/>
    <property type="gene ID" value="BURPS1710b_3405"/>
</dbReference>
<dbReference type="GeneID" id="93061492"/>
<dbReference type="KEGG" id="bpm:BURPS1710b_3405"/>
<dbReference type="HOGENOM" id="CLU_978872_0_0_4"/>
<dbReference type="Proteomes" id="UP000002700">
    <property type="component" value="Chromosome I"/>
</dbReference>
<dbReference type="GO" id="GO:0005737">
    <property type="term" value="C:cytoplasm"/>
    <property type="evidence" value="ECO:0007669"/>
    <property type="project" value="UniProtKB-SubCell"/>
</dbReference>
<dbReference type="GO" id="GO:0048476">
    <property type="term" value="C:Holliday junction resolvase complex"/>
    <property type="evidence" value="ECO:0007669"/>
    <property type="project" value="UniProtKB-UniRule"/>
</dbReference>
<dbReference type="GO" id="GO:0008821">
    <property type="term" value="F:crossover junction DNA endonuclease activity"/>
    <property type="evidence" value="ECO:0007669"/>
    <property type="project" value="UniProtKB-UniRule"/>
</dbReference>
<dbReference type="GO" id="GO:0003677">
    <property type="term" value="F:DNA binding"/>
    <property type="evidence" value="ECO:0007669"/>
    <property type="project" value="UniProtKB-KW"/>
</dbReference>
<dbReference type="GO" id="GO:0000287">
    <property type="term" value="F:magnesium ion binding"/>
    <property type="evidence" value="ECO:0007669"/>
    <property type="project" value="UniProtKB-UniRule"/>
</dbReference>
<dbReference type="GO" id="GO:0006310">
    <property type="term" value="P:DNA recombination"/>
    <property type="evidence" value="ECO:0007669"/>
    <property type="project" value="UniProtKB-UniRule"/>
</dbReference>
<dbReference type="GO" id="GO:0006281">
    <property type="term" value="P:DNA repair"/>
    <property type="evidence" value="ECO:0007669"/>
    <property type="project" value="UniProtKB-UniRule"/>
</dbReference>
<dbReference type="CDD" id="cd16962">
    <property type="entry name" value="RuvC"/>
    <property type="match status" value="1"/>
</dbReference>
<dbReference type="FunFam" id="3.30.420.10:FF:000002">
    <property type="entry name" value="Crossover junction endodeoxyribonuclease RuvC"/>
    <property type="match status" value="1"/>
</dbReference>
<dbReference type="Gene3D" id="3.30.420.10">
    <property type="entry name" value="Ribonuclease H-like superfamily/Ribonuclease H"/>
    <property type="match status" value="1"/>
</dbReference>
<dbReference type="HAMAP" id="MF_00034">
    <property type="entry name" value="RuvC"/>
    <property type="match status" value="1"/>
</dbReference>
<dbReference type="InterPro" id="IPR012337">
    <property type="entry name" value="RNaseH-like_sf"/>
</dbReference>
<dbReference type="InterPro" id="IPR036397">
    <property type="entry name" value="RNaseH_sf"/>
</dbReference>
<dbReference type="InterPro" id="IPR020563">
    <property type="entry name" value="X-over_junc_endoDNase_Mg_BS"/>
</dbReference>
<dbReference type="InterPro" id="IPR002176">
    <property type="entry name" value="X-over_junc_endoDNase_RuvC"/>
</dbReference>
<dbReference type="NCBIfam" id="TIGR00228">
    <property type="entry name" value="ruvC"/>
    <property type="match status" value="1"/>
</dbReference>
<dbReference type="PANTHER" id="PTHR30194">
    <property type="entry name" value="CROSSOVER JUNCTION ENDODEOXYRIBONUCLEASE RUVC"/>
    <property type="match status" value="1"/>
</dbReference>
<dbReference type="PANTHER" id="PTHR30194:SF3">
    <property type="entry name" value="CROSSOVER JUNCTION ENDODEOXYRIBONUCLEASE RUVC"/>
    <property type="match status" value="1"/>
</dbReference>
<dbReference type="Pfam" id="PF02075">
    <property type="entry name" value="RuvC"/>
    <property type="match status" value="1"/>
</dbReference>
<dbReference type="PRINTS" id="PR00696">
    <property type="entry name" value="RSOLVASERUVC"/>
</dbReference>
<dbReference type="SUPFAM" id="SSF53098">
    <property type="entry name" value="Ribonuclease H-like"/>
    <property type="match status" value="1"/>
</dbReference>
<dbReference type="PROSITE" id="PS01321">
    <property type="entry name" value="RUVC"/>
    <property type="match status" value="1"/>
</dbReference>
<proteinExistence type="inferred from homology"/>
<comment type="function">
    <text evidence="1">The RuvA-RuvB-RuvC complex processes Holliday junction (HJ) DNA during genetic recombination and DNA repair. Endonuclease that resolves HJ intermediates. Cleaves cruciform DNA by making single-stranded nicks across the HJ at symmetrical positions within the homologous arms, yielding a 5'-phosphate and a 3'-hydroxyl group; requires a central core of homology in the junction. The consensus cleavage sequence is 5'-(A/T)TT(C/G)-3'. Cleavage occurs on the 3'-side of the TT dinucleotide at the point of strand exchange. HJ branch migration catalyzed by RuvA-RuvB allows RuvC to scan DNA until it finds its consensus sequence, where it cleaves and resolves the cruciform DNA.</text>
</comment>
<comment type="catalytic activity">
    <reaction evidence="1">
        <text>Endonucleolytic cleavage at a junction such as a reciprocal single-stranded crossover between two homologous DNA duplexes (Holliday junction).</text>
        <dbReference type="EC" id="3.1.21.10"/>
    </reaction>
</comment>
<comment type="cofactor">
    <cofactor evidence="1">
        <name>Mg(2+)</name>
        <dbReference type="ChEBI" id="CHEBI:18420"/>
    </cofactor>
    <text evidence="1">Binds 2 Mg(2+) ion per subunit.</text>
</comment>
<comment type="subunit">
    <text evidence="1">Homodimer which binds Holliday junction (HJ) DNA. The HJ becomes 2-fold symmetrical on binding to RuvC with unstacked arms; it has a different conformation from HJ DNA in complex with RuvA. In the full resolvosome a probable DNA-RuvA(4)-RuvB(12)-RuvC(2) complex forms which resolves the HJ.</text>
</comment>
<comment type="subcellular location">
    <subcellularLocation>
        <location evidence="1">Cytoplasm</location>
    </subcellularLocation>
</comment>
<comment type="similarity">
    <text evidence="1">Belongs to the RuvC family.</text>
</comment>
<comment type="sequence caution" evidence="2">
    <conflict type="erroneous initiation">
        <sequence resource="EMBL-CDS" id="ABA50071"/>
    </conflict>
    <text>Extended N-terminus.</text>
</comment>